<keyword id="KW-0131">Cell cycle</keyword>
<keyword id="KW-0132">Cell division</keyword>
<keyword id="KW-0143">Chaperone</keyword>
<keyword id="KW-0963">Cytoplasm</keyword>
<keyword id="KW-0413">Isomerase</keyword>
<keyword id="KW-1185">Reference proteome</keyword>
<keyword id="KW-0697">Rotamase</keyword>
<feature type="chain" id="PRO_1000059322" description="Trigger factor">
    <location>
        <begin position="1"/>
        <end position="428"/>
    </location>
</feature>
<feature type="domain" description="PPIase FKBP-type" evidence="1">
    <location>
        <begin position="163"/>
        <end position="248"/>
    </location>
</feature>
<organism>
    <name type="scientific">Alkaliphilus oremlandii (strain OhILAs)</name>
    <name type="common">Clostridium oremlandii (strain OhILAs)</name>
    <dbReference type="NCBI Taxonomy" id="350688"/>
    <lineage>
        <taxon>Bacteria</taxon>
        <taxon>Bacillati</taxon>
        <taxon>Bacillota</taxon>
        <taxon>Clostridia</taxon>
        <taxon>Peptostreptococcales</taxon>
        <taxon>Natronincolaceae</taxon>
        <taxon>Alkaliphilus</taxon>
    </lineage>
</organism>
<gene>
    <name evidence="1" type="primary">tig</name>
    <name type="ordered locus">Clos_2175</name>
</gene>
<evidence type="ECO:0000255" key="1">
    <source>
        <dbReference type="HAMAP-Rule" id="MF_00303"/>
    </source>
</evidence>
<name>TIG_ALKOO</name>
<comment type="function">
    <text evidence="1">Involved in protein export. Acts as a chaperone by maintaining the newly synthesized protein in an open conformation. Functions as a peptidyl-prolyl cis-trans isomerase.</text>
</comment>
<comment type="catalytic activity">
    <reaction evidence="1">
        <text>[protein]-peptidylproline (omega=180) = [protein]-peptidylproline (omega=0)</text>
        <dbReference type="Rhea" id="RHEA:16237"/>
        <dbReference type="Rhea" id="RHEA-COMP:10747"/>
        <dbReference type="Rhea" id="RHEA-COMP:10748"/>
        <dbReference type="ChEBI" id="CHEBI:83833"/>
        <dbReference type="ChEBI" id="CHEBI:83834"/>
        <dbReference type="EC" id="5.2.1.8"/>
    </reaction>
</comment>
<comment type="subcellular location">
    <subcellularLocation>
        <location>Cytoplasm</location>
    </subcellularLocation>
    <text evidence="1">About half TF is bound to the ribosome near the polypeptide exit tunnel while the other half is free in the cytoplasm.</text>
</comment>
<comment type="domain">
    <text evidence="1">Consists of 3 domains; the N-terminus binds the ribosome, the middle domain has PPIase activity, while the C-terminus has intrinsic chaperone activity on its own.</text>
</comment>
<comment type="similarity">
    <text evidence="1">Belongs to the FKBP-type PPIase family. Tig subfamily.</text>
</comment>
<proteinExistence type="inferred from homology"/>
<dbReference type="EC" id="5.2.1.8" evidence="1"/>
<dbReference type="EMBL" id="CP000853">
    <property type="protein sequence ID" value="ABW19711.1"/>
    <property type="molecule type" value="Genomic_DNA"/>
</dbReference>
<dbReference type="RefSeq" id="WP_012160020.1">
    <property type="nucleotide sequence ID" value="NC_009922.1"/>
</dbReference>
<dbReference type="SMR" id="A8MIS9"/>
<dbReference type="STRING" id="350688.Clos_2175"/>
<dbReference type="KEGG" id="aoe:Clos_2175"/>
<dbReference type="eggNOG" id="COG0544">
    <property type="taxonomic scope" value="Bacteria"/>
</dbReference>
<dbReference type="HOGENOM" id="CLU_033058_3_2_9"/>
<dbReference type="OrthoDB" id="9767721at2"/>
<dbReference type="Proteomes" id="UP000000269">
    <property type="component" value="Chromosome"/>
</dbReference>
<dbReference type="GO" id="GO:0005737">
    <property type="term" value="C:cytoplasm"/>
    <property type="evidence" value="ECO:0007669"/>
    <property type="project" value="UniProtKB-SubCell"/>
</dbReference>
<dbReference type="GO" id="GO:0003755">
    <property type="term" value="F:peptidyl-prolyl cis-trans isomerase activity"/>
    <property type="evidence" value="ECO:0007669"/>
    <property type="project" value="UniProtKB-UniRule"/>
</dbReference>
<dbReference type="GO" id="GO:0044183">
    <property type="term" value="F:protein folding chaperone"/>
    <property type="evidence" value="ECO:0007669"/>
    <property type="project" value="TreeGrafter"/>
</dbReference>
<dbReference type="GO" id="GO:0043022">
    <property type="term" value="F:ribosome binding"/>
    <property type="evidence" value="ECO:0007669"/>
    <property type="project" value="TreeGrafter"/>
</dbReference>
<dbReference type="GO" id="GO:0051083">
    <property type="term" value="P:'de novo' cotranslational protein folding"/>
    <property type="evidence" value="ECO:0007669"/>
    <property type="project" value="TreeGrafter"/>
</dbReference>
<dbReference type="GO" id="GO:0051301">
    <property type="term" value="P:cell division"/>
    <property type="evidence" value="ECO:0007669"/>
    <property type="project" value="UniProtKB-KW"/>
</dbReference>
<dbReference type="GO" id="GO:0061077">
    <property type="term" value="P:chaperone-mediated protein folding"/>
    <property type="evidence" value="ECO:0007669"/>
    <property type="project" value="TreeGrafter"/>
</dbReference>
<dbReference type="GO" id="GO:0015031">
    <property type="term" value="P:protein transport"/>
    <property type="evidence" value="ECO:0007669"/>
    <property type="project" value="UniProtKB-UniRule"/>
</dbReference>
<dbReference type="GO" id="GO:0043335">
    <property type="term" value="P:protein unfolding"/>
    <property type="evidence" value="ECO:0007669"/>
    <property type="project" value="TreeGrafter"/>
</dbReference>
<dbReference type="FunFam" id="3.10.50.40:FF:000001">
    <property type="entry name" value="Trigger factor"/>
    <property type="match status" value="1"/>
</dbReference>
<dbReference type="Gene3D" id="3.10.50.40">
    <property type="match status" value="1"/>
</dbReference>
<dbReference type="Gene3D" id="3.30.70.1050">
    <property type="entry name" value="Trigger factor ribosome-binding domain"/>
    <property type="match status" value="1"/>
</dbReference>
<dbReference type="Gene3D" id="1.10.3120.10">
    <property type="entry name" value="Trigger factor, C-terminal domain"/>
    <property type="match status" value="1"/>
</dbReference>
<dbReference type="HAMAP" id="MF_00303">
    <property type="entry name" value="Trigger_factor_Tig"/>
    <property type="match status" value="1"/>
</dbReference>
<dbReference type="InterPro" id="IPR046357">
    <property type="entry name" value="PPIase_dom_sf"/>
</dbReference>
<dbReference type="InterPro" id="IPR001179">
    <property type="entry name" value="PPIase_FKBP_dom"/>
</dbReference>
<dbReference type="InterPro" id="IPR005215">
    <property type="entry name" value="Trig_fac"/>
</dbReference>
<dbReference type="InterPro" id="IPR008880">
    <property type="entry name" value="Trigger_fac_C"/>
</dbReference>
<dbReference type="InterPro" id="IPR037041">
    <property type="entry name" value="Trigger_fac_C_sf"/>
</dbReference>
<dbReference type="InterPro" id="IPR008881">
    <property type="entry name" value="Trigger_fac_ribosome-bd_bac"/>
</dbReference>
<dbReference type="InterPro" id="IPR036611">
    <property type="entry name" value="Trigger_fac_ribosome-bd_sf"/>
</dbReference>
<dbReference type="InterPro" id="IPR027304">
    <property type="entry name" value="Trigger_fact/SurA_dom_sf"/>
</dbReference>
<dbReference type="NCBIfam" id="TIGR00115">
    <property type="entry name" value="tig"/>
    <property type="match status" value="1"/>
</dbReference>
<dbReference type="PANTHER" id="PTHR30560">
    <property type="entry name" value="TRIGGER FACTOR CHAPERONE AND PEPTIDYL-PROLYL CIS/TRANS ISOMERASE"/>
    <property type="match status" value="1"/>
</dbReference>
<dbReference type="PANTHER" id="PTHR30560:SF3">
    <property type="entry name" value="TRIGGER FACTOR-LIKE PROTEIN TIG, CHLOROPLASTIC"/>
    <property type="match status" value="1"/>
</dbReference>
<dbReference type="Pfam" id="PF00254">
    <property type="entry name" value="FKBP_C"/>
    <property type="match status" value="1"/>
</dbReference>
<dbReference type="Pfam" id="PF05698">
    <property type="entry name" value="Trigger_C"/>
    <property type="match status" value="1"/>
</dbReference>
<dbReference type="Pfam" id="PF05697">
    <property type="entry name" value="Trigger_N"/>
    <property type="match status" value="1"/>
</dbReference>
<dbReference type="PIRSF" id="PIRSF003095">
    <property type="entry name" value="Trigger_factor"/>
    <property type="match status" value="1"/>
</dbReference>
<dbReference type="SUPFAM" id="SSF54534">
    <property type="entry name" value="FKBP-like"/>
    <property type="match status" value="1"/>
</dbReference>
<dbReference type="SUPFAM" id="SSF109998">
    <property type="entry name" value="Triger factor/SurA peptide-binding domain-like"/>
    <property type="match status" value="1"/>
</dbReference>
<dbReference type="SUPFAM" id="SSF102735">
    <property type="entry name" value="Trigger factor ribosome-binding domain"/>
    <property type="match status" value="1"/>
</dbReference>
<dbReference type="PROSITE" id="PS50059">
    <property type="entry name" value="FKBP_PPIASE"/>
    <property type="match status" value="1"/>
</dbReference>
<sequence length="428" mass="48950">MSSEVIKRENVEVTLKVVVEAAKFEEAINKAYNKMKSRFNIQGFRKGKAPRKIVEKFYGVEVFYEEAFNIVFPEVYEAALDEHNIDPVDHPKVDLEDIVAGQDVVFTAVVEVMPEFEVADYVGIEVEKKEYNVQEEDIQRELDGLAEKNSRMITVEDRAVKEGDMVIIDYKGMVDGIAFEGGTAERQSLTIGSGQFIPGFEEQLVGKNIGEEVEVQVTFPEEYHAEELAGKAAIFEVKIHEIKEKEVPVIDDEFAKDVSEFDTLEELTNDIKKNLEEDAKNRAIQEQRNDVIEAIANKVELEIPSAVVNRQIDNMLADFDYRLQFQGLNLEYYLQLTGTKEEDLREQMRPDAVKTVKNELILEKIGAKENIVATDEELEEQLEKMAKQYNQEIEKLKTNLRQQDLNAIKEGIIIRKTVDFLAENAKLI</sequence>
<accession>A8MIS9</accession>
<reference key="1">
    <citation type="submission" date="2007-10" db="EMBL/GenBank/DDBJ databases">
        <title>Complete genome of Alkaliphilus oremlandii OhILAs.</title>
        <authorList>
            <person name="Copeland A."/>
            <person name="Lucas S."/>
            <person name="Lapidus A."/>
            <person name="Barry K."/>
            <person name="Detter J.C."/>
            <person name="Glavina del Rio T."/>
            <person name="Hammon N."/>
            <person name="Israni S."/>
            <person name="Dalin E."/>
            <person name="Tice H."/>
            <person name="Pitluck S."/>
            <person name="Chain P."/>
            <person name="Malfatti S."/>
            <person name="Shin M."/>
            <person name="Vergez L."/>
            <person name="Schmutz J."/>
            <person name="Larimer F."/>
            <person name="Land M."/>
            <person name="Hauser L."/>
            <person name="Kyrpides N."/>
            <person name="Mikhailova N."/>
            <person name="Stolz J.F."/>
            <person name="Dawson A."/>
            <person name="Fisher E."/>
            <person name="Crable B."/>
            <person name="Perera E."/>
            <person name="Lisak J."/>
            <person name="Ranganathan M."/>
            <person name="Basu P."/>
            <person name="Richardson P."/>
        </authorList>
    </citation>
    <scope>NUCLEOTIDE SEQUENCE [LARGE SCALE GENOMIC DNA]</scope>
    <source>
        <strain>OhILAs</strain>
    </source>
</reference>
<protein>
    <recommendedName>
        <fullName evidence="1">Trigger factor</fullName>
        <shortName evidence="1">TF</shortName>
        <ecNumber evidence="1">5.2.1.8</ecNumber>
    </recommendedName>
    <alternativeName>
        <fullName evidence="1">PPIase</fullName>
    </alternativeName>
</protein>